<comment type="function">
    <text evidence="2 3">Functions as a low-affinity sodium transporter.</text>
</comment>
<comment type="catalytic activity">
    <reaction evidence="2 3">
        <text>Na(+)(in) = Na(+)(out)</text>
        <dbReference type="Rhea" id="RHEA:34963"/>
        <dbReference type="ChEBI" id="CHEBI:29101"/>
    </reaction>
</comment>
<comment type="biophysicochemical properties">
    <kinetics>
        <KM evidence="2">11 mM for Na(+)</KM>
        <Vmax evidence="2">33.0 nmol/min/mg enzyme with sodium as ion</Vmax>
        <text>Measured in yeast strain disrupted for potassium transporters TRK1 and TRK2.</text>
    </kinetics>
</comment>
<comment type="subcellular location">
    <subcellularLocation>
        <location evidence="1">Membrane</location>
        <topology evidence="1">Multi-pass membrane protein</topology>
    </subcellularLocation>
</comment>
<comment type="tissue specificity">
    <text evidence="2 3">Expressed in shoots (PubMed:12795699). In roots, expressed in epidermis, exodermis, cortex, and sieve elements and companion cells of phloem (PubMed:19482918). In mature leaves, expressed in large highly vacuolated cells of the adaxial epidermis, phloem and xylem (PubMed:19482918).</text>
</comment>
<comment type="induction">
    <text evidence="2">By potassium starvation in roots.</text>
</comment>
<comment type="domain">
    <text evidence="6">HKT transporters are proposed to contain 4 pore-forming regions enclosed by transmembrane segments with each containing a potassium channel-like selectivity filter motif.</text>
</comment>
<comment type="similarity">
    <text evidence="6">Belongs to the TrkH potassium transport family. HKT (TC 2.A.38.3) subfamily.</text>
</comment>
<comment type="sequence caution" evidence="6">
    <conflict type="erroneous gene model prediction">
        <sequence resource="EMBL-CDS" id="CAE03638"/>
    </conflict>
</comment>
<proteinExistence type="evidence at protein level"/>
<name>HKT11_ORYSJ</name>
<feature type="chain" id="PRO_0000070469" description="Cation transporter HKT1;1">
    <location>
        <begin position="1"/>
        <end position="552"/>
    </location>
</feature>
<feature type="topological domain" description="Cytoplasmic" evidence="1">
    <location>
        <begin position="1"/>
        <end position="70"/>
    </location>
</feature>
<feature type="transmembrane region" description="Helical; Name=1" evidence="1">
    <location>
        <begin position="71"/>
        <end position="91"/>
    </location>
</feature>
<feature type="transmembrane region" description="Helical; Name=2" evidence="1">
    <location>
        <begin position="133"/>
        <end position="153"/>
    </location>
</feature>
<feature type="topological domain" description="Cytoplasmic" evidence="1">
    <location>
        <begin position="154"/>
        <end position="221"/>
    </location>
</feature>
<feature type="transmembrane region" description="Helical; Name=3" evidence="1">
    <location>
        <begin position="222"/>
        <end position="242"/>
    </location>
</feature>
<feature type="transmembrane region" description="Helical; Name=4" evidence="1">
    <location>
        <begin position="291"/>
        <end position="311"/>
    </location>
</feature>
<feature type="topological domain" description="Cytoplasmic" evidence="1">
    <location>
        <begin position="312"/>
        <end position="348"/>
    </location>
</feature>
<feature type="transmembrane region" description="Helical; Name=5" evidence="1">
    <location>
        <begin position="349"/>
        <end position="369"/>
    </location>
</feature>
<feature type="transmembrane region" description="Helical; Name=6" evidence="1">
    <location>
        <begin position="402"/>
        <end position="422"/>
    </location>
</feature>
<feature type="topological domain" description="Cytoplasmic" evidence="1">
    <location>
        <begin position="423"/>
        <end position="448"/>
    </location>
</feature>
<feature type="transmembrane region" description="Helical; Name=7" evidence="1">
    <location>
        <begin position="449"/>
        <end position="471"/>
    </location>
</feature>
<feature type="transmembrane region" description="Helical; Name=8" evidence="1">
    <location>
        <begin position="524"/>
        <end position="544"/>
    </location>
</feature>
<feature type="topological domain" description="Cytoplasmic" evidence="1">
    <location>
        <begin position="545"/>
        <end position="552"/>
    </location>
</feature>
<dbReference type="EMBL" id="AJ491815">
    <property type="protein sequence ID" value="CAD37182.1"/>
    <property type="molecule type" value="Genomic_DNA"/>
</dbReference>
<dbReference type="EMBL" id="AJ491816">
    <property type="protein sequence ID" value="CAD37183.1"/>
    <property type="molecule type" value="mRNA"/>
</dbReference>
<dbReference type="EMBL" id="AL606691">
    <property type="protein sequence ID" value="CAE03638.1"/>
    <property type="status" value="ALT_SEQ"/>
    <property type="molecule type" value="Genomic_DNA"/>
</dbReference>
<dbReference type="EMBL" id="AP008210">
    <property type="protein sequence ID" value="BAH92812.1"/>
    <property type="molecule type" value="Genomic_DNA"/>
</dbReference>
<dbReference type="EMBL" id="AP014960">
    <property type="protein sequence ID" value="BAS90908.1"/>
    <property type="molecule type" value="Genomic_DNA"/>
</dbReference>
<dbReference type="RefSeq" id="NP_001411133.1">
    <property type="nucleotide sequence ID" value="NM_001424204.1"/>
</dbReference>
<dbReference type="RefSeq" id="XP_015633650.1">
    <property type="nucleotide sequence ID" value="XM_015778164.1"/>
</dbReference>
<dbReference type="PDB" id="8Y6J">
    <property type="method" value="EM"/>
    <property type="resolution" value="3.46 A"/>
    <property type="chains" value="A/B=1-162, A/B=217-552"/>
</dbReference>
<dbReference type="PDBsum" id="8Y6J"/>
<dbReference type="EMDB" id="EMD-38988"/>
<dbReference type="SMR" id="Q7XPF8"/>
<dbReference type="FunCoup" id="Q7XPF8">
    <property type="interactions" value="6"/>
</dbReference>
<dbReference type="STRING" id="39947.Q7XPF8"/>
<dbReference type="TCDB" id="2.A.38.3.5">
    <property type="family name" value="the k(+) transporter (trk) family"/>
</dbReference>
<dbReference type="PaxDb" id="39947-Q7XPF8"/>
<dbReference type="EnsemblPlants" id="Os04t0607500-01">
    <property type="protein sequence ID" value="Os04t0607500-01"/>
    <property type="gene ID" value="Os04g0607500"/>
</dbReference>
<dbReference type="GeneID" id="9266695"/>
<dbReference type="Gramene" id="Os04t0607500-01">
    <property type="protein sequence ID" value="Os04t0607500-01"/>
    <property type="gene ID" value="Os04g0607500"/>
</dbReference>
<dbReference type="KEGG" id="dosa:Os04g0607500"/>
<dbReference type="eggNOG" id="KOG1341">
    <property type="taxonomic scope" value="Eukaryota"/>
</dbReference>
<dbReference type="HOGENOM" id="CLU_008384_2_0_1"/>
<dbReference type="InParanoid" id="Q7XPF8"/>
<dbReference type="OMA" id="MFICSFE"/>
<dbReference type="OrthoDB" id="9999863at2759"/>
<dbReference type="SABIO-RK" id="Q7XPF8"/>
<dbReference type="Proteomes" id="UP000000763">
    <property type="component" value="Chromosome 4"/>
</dbReference>
<dbReference type="Proteomes" id="UP000059680">
    <property type="component" value="Chromosome 4"/>
</dbReference>
<dbReference type="ExpressionAtlas" id="Q7XPF8">
    <property type="expression patterns" value="baseline and differential"/>
</dbReference>
<dbReference type="GO" id="GO:0005886">
    <property type="term" value="C:plasma membrane"/>
    <property type="evidence" value="ECO:0000318"/>
    <property type="project" value="GO_Central"/>
</dbReference>
<dbReference type="GO" id="GO:0008324">
    <property type="term" value="F:monoatomic cation transmembrane transporter activity"/>
    <property type="evidence" value="ECO:0000318"/>
    <property type="project" value="GO_Central"/>
</dbReference>
<dbReference type="GO" id="GO:0015081">
    <property type="term" value="F:sodium ion transmembrane transporter activity"/>
    <property type="evidence" value="ECO:0000314"/>
    <property type="project" value="UniProtKB"/>
</dbReference>
<dbReference type="GO" id="GO:0035725">
    <property type="term" value="P:sodium ion transmembrane transport"/>
    <property type="evidence" value="ECO:0000314"/>
    <property type="project" value="UniProtKB"/>
</dbReference>
<dbReference type="InterPro" id="IPR003445">
    <property type="entry name" value="Cat_transpt"/>
</dbReference>
<dbReference type="InterPro" id="IPR051143">
    <property type="entry name" value="TrkH_K-transport"/>
</dbReference>
<dbReference type="PANTHER" id="PTHR31064:SF8">
    <property type="entry name" value="CATION TRANSPORTER HKT1_1"/>
    <property type="match status" value="1"/>
</dbReference>
<dbReference type="PANTHER" id="PTHR31064">
    <property type="entry name" value="POTASSIUM TRANSPORT PROTEIN DDB_G0292412-RELATED"/>
    <property type="match status" value="1"/>
</dbReference>
<dbReference type="Pfam" id="PF02386">
    <property type="entry name" value="TrkH"/>
    <property type="match status" value="1"/>
</dbReference>
<organism>
    <name type="scientific">Oryza sativa subsp. japonica</name>
    <name type="common">Rice</name>
    <dbReference type="NCBI Taxonomy" id="39947"/>
    <lineage>
        <taxon>Eukaryota</taxon>
        <taxon>Viridiplantae</taxon>
        <taxon>Streptophyta</taxon>
        <taxon>Embryophyta</taxon>
        <taxon>Tracheophyta</taxon>
        <taxon>Spermatophyta</taxon>
        <taxon>Magnoliopsida</taxon>
        <taxon>Liliopsida</taxon>
        <taxon>Poales</taxon>
        <taxon>Poaceae</taxon>
        <taxon>BOP clade</taxon>
        <taxon>Oryzoideae</taxon>
        <taxon>Oryzeae</taxon>
        <taxon>Oryzinae</taxon>
        <taxon>Oryza</taxon>
        <taxon>Oryza sativa</taxon>
    </lineage>
</organism>
<gene>
    <name evidence="5" type="primary">HKT1;1</name>
    <name evidence="5" type="synonym">HKT4</name>
    <name evidence="7" type="ordered locus">Os04g0607500</name>
    <name evidence="6" type="ordered locus">LOC_Os04g51820</name>
    <name evidence="8" type="ORF">OSJNBa0060N03.3</name>
</gene>
<keyword id="KW-0002">3D-structure</keyword>
<keyword id="KW-0406">Ion transport</keyword>
<keyword id="KW-0472">Membrane</keyword>
<keyword id="KW-1185">Reference proteome</keyword>
<keyword id="KW-0915">Sodium</keyword>
<keyword id="KW-0739">Sodium transport</keyword>
<keyword id="KW-0812">Transmembrane</keyword>
<keyword id="KW-1133">Transmembrane helix</keyword>
<keyword id="KW-0813">Transport</keyword>
<protein>
    <recommendedName>
        <fullName evidence="5">Cation transporter HKT1;1</fullName>
        <shortName evidence="5">OsHKT1;1</shortName>
    </recommendedName>
    <alternativeName>
        <fullName evidence="4">Cation transporter HKT4</fullName>
        <shortName evidence="4">OsHKT4</shortName>
    </alternativeName>
</protein>
<evidence type="ECO:0000255" key="1"/>
<evidence type="ECO:0000269" key="2">
    <source>
    </source>
</evidence>
<evidence type="ECO:0000269" key="3">
    <source>
    </source>
</evidence>
<evidence type="ECO:0000303" key="4">
    <source>
    </source>
</evidence>
<evidence type="ECO:0000303" key="5">
    <source>
    </source>
</evidence>
<evidence type="ECO:0000305" key="6"/>
<evidence type="ECO:0000312" key="7">
    <source>
        <dbReference type="EMBL" id="BAS90908.1"/>
    </source>
</evidence>
<evidence type="ECO:0000312" key="8">
    <source>
        <dbReference type="EMBL" id="CAE03638.1"/>
    </source>
</evidence>
<reference key="1">
    <citation type="journal article" date="2003" name="Plant J.">
        <title>Sodium transport and HKT transporters: the rice model.</title>
        <authorList>
            <person name="Garciadeblas B."/>
            <person name="Senn M.E."/>
            <person name="Banuelos M.A."/>
            <person name="Rodriguez-Navarro A."/>
        </authorList>
    </citation>
    <scope>NUCLEOTIDE SEQUENCE [GENOMIC DNA / MRNA]</scope>
    <scope>FUNCTION</scope>
    <scope>BIOPHYSICOCHEMICAL PROPERTIES</scope>
    <scope>TISSUE SPECIFICITY</scope>
    <scope>INDUCTION</scope>
    <scope>NOMENCLATURE</scope>
    <source>
        <strain>cv. Nipponbare</strain>
    </source>
</reference>
<reference key="2">
    <citation type="journal article" date="2002" name="Nature">
        <title>Sequence and analysis of rice chromosome 4.</title>
        <authorList>
            <person name="Feng Q."/>
            <person name="Zhang Y."/>
            <person name="Hao P."/>
            <person name="Wang S."/>
            <person name="Fu G."/>
            <person name="Huang Y."/>
            <person name="Li Y."/>
            <person name="Zhu J."/>
            <person name="Liu Y."/>
            <person name="Hu X."/>
            <person name="Jia P."/>
            <person name="Zhang Y."/>
            <person name="Zhao Q."/>
            <person name="Ying K."/>
            <person name="Yu S."/>
            <person name="Tang Y."/>
            <person name="Weng Q."/>
            <person name="Zhang L."/>
            <person name="Lu Y."/>
            <person name="Mu J."/>
            <person name="Lu Y."/>
            <person name="Zhang L.S."/>
            <person name="Yu Z."/>
            <person name="Fan D."/>
            <person name="Liu X."/>
            <person name="Lu T."/>
            <person name="Li C."/>
            <person name="Wu Y."/>
            <person name="Sun T."/>
            <person name="Lei H."/>
            <person name="Li T."/>
            <person name="Hu H."/>
            <person name="Guan J."/>
            <person name="Wu M."/>
            <person name="Zhang R."/>
            <person name="Zhou B."/>
            <person name="Chen Z."/>
            <person name="Chen L."/>
            <person name="Jin Z."/>
            <person name="Wang R."/>
            <person name="Yin H."/>
            <person name="Cai Z."/>
            <person name="Ren S."/>
            <person name="Lv G."/>
            <person name="Gu W."/>
            <person name="Zhu G."/>
            <person name="Tu Y."/>
            <person name="Jia J."/>
            <person name="Zhang Y."/>
            <person name="Chen J."/>
            <person name="Kang H."/>
            <person name="Chen X."/>
            <person name="Shao C."/>
            <person name="Sun Y."/>
            <person name="Hu Q."/>
            <person name="Zhang X."/>
            <person name="Zhang W."/>
            <person name="Wang L."/>
            <person name="Ding C."/>
            <person name="Sheng H."/>
            <person name="Gu J."/>
            <person name="Chen S."/>
            <person name="Ni L."/>
            <person name="Zhu F."/>
            <person name="Chen W."/>
            <person name="Lan L."/>
            <person name="Lai Y."/>
            <person name="Cheng Z."/>
            <person name="Gu M."/>
            <person name="Jiang J."/>
            <person name="Li J."/>
            <person name="Hong G."/>
            <person name="Xue Y."/>
            <person name="Han B."/>
        </authorList>
    </citation>
    <scope>NUCLEOTIDE SEQUENCE [LARGE SCALE GENOMIC DNA]</scope>
    <source>
        <strain>cv. Nipponbare</strain>
    </source>
</reference>
<reference key="3">
    <citation type="journal article" date="2005" name="Nature">
        <title>The map-based sequence of the rice genome.</title>
        <authorList>
            <consortium name="International rice genome sequencing project (IRGSP)"/>
        </authorList>
    </citation>
    <scope>NUCLEOTIDE SEQUENCE [LARGE SCALE GENOMIC DNA]</scope>
    <source>
        <strain>cv. Nipponbare</strain>
    </source>
</reference>
<reference key="4">
    <citation type="journal article" date="2008" name="Nucleic Acids Res.">
        <title>The rice annotation project database (RAP-DB): 2008 update.</title>
        <authorList>
            <consortium name="The rice annotation project (RAP)"/>
        </authorList>
    </citation>
    <scope>GENOME REANNOTATION</scope>
    <source>
        <strain>cv. Nipponbare</strain>
    </source>
</reference>
<reference key="5">
    <citation type="journal article" date="2013" name="Rice">
        <title>Improvement of the Oryza sativa Nipponbare reference genome using next generation sequence and optical map data.</title>
        <authorList>
            <person name="Kawahara Y."/>
            <person name="de la Bastide M."/>
            <person name="Hamilton J.P."/>
            <person name="Kanamori H."/>
            <person name="McCombie W.R."/>
            <person name="Ouyang S."/>
            <person name="Schwartz D.C."/>
            <person name="Tanaka T."/>
            <person name="Wu J."/>
            <person name="Zhou S."/>
            <person name="Childs K.L."/>
            <person name="Davidson R.M."/>
            <person name="Lin H."/>
            <person name="Quesada-Ocampo L."/>
            <person name="Vaillancourt B."/>
            <person name="Sakai H."/>
            <person name="Lee S.S."/>
            <person name="Kim J."/>
            <person name="Numa H."/>
            <person name="Itoh T."/>
            <person name="Buell C.R."/>
            <person name="Matsumoto T."/>
        </authorList>
    </citation>
    <scope>GENOME REANNOTATION</scope>
    <source>
        <strain>cv. Nipponbare</strain>
    </source>
</reference>
<reference key="6">
    <citation type="journal article" date="2006" name="Trends Plant Sci.">
        <title>Nomenclature for HKT transporters, key determinants of plant salinity tolerance.</title>
        <authorList>
            <person name="Platten J.D."/>
            <person name="Cotsaftis O."/>
            <person name="Berthomieu P."/>
            <person name="Bohnert H."/>
            <person name="Davenport R.J."/>
            <person name="Fairbairn D.J."/>
            <person name="Horie T."/>
            <person name="Leigh R.A."/>
            <person name="Lin H.X."/>
            <person name="Luan S."/>
            <person name="Maeser P."/>
            <person name="Pantoja O."/>
            <person name="Rodriguez-Navarro A."/>
            <person name="Schachtman D.P."/>
            <person name="Schroeder J.I."/>
            <person name="Sentenac H."/>
            <person name="Uozumi N."/>
            <person name="Very A.A."/>
            <person name="Zhu J.K."/>
            <person name="Dennis E.S."/>
            <person name="Tester M."/>
        </authorList>
    </citation>
    <scope>GENE FAMILY</scope>
    <scope>NOMENCLATURE</scope>
</reference>
<reference key="7">
    <citation type="journal article" date="2009" name="Plant Physiol.">
        <title>Diversity in expression patterns and functional properties in the rice HKT transporter family.</title>
        <authorList>
            <person name="Jabnoune M."/>
            <person name="Espeout S."/>
            <person name="Mieulet D."/>
            <person name="Fizames C."/>
            <person name="Verdeil J.L."/>
            <person name="Conejero G."/>
            <person name="Rodriguez-Navarro A."/>
            <person name="Sentenac H."/>
            <person name="Guiderdoni E."/>
            <person name="Abdelly C."/>
            <person name="Very A.A."/>
        </authorList>
    </citation>
    <scope>FUNCTION</scope>
    <scope>TISSUE SPECIFICITY</scope>
</reference>
<sequence length="552" mass="61862">MHPPSLVLDTLKRIKLYIAMKLLLPNSEVPRIYWEKAQHLCGFLSMKLISRARCVASSVKQSYSFLVCKSNPLVVQLVYFVIISFAGFLALKNLKPQGKPGPKDLDLLFTSVSTLTVSSMATVEMEDLSDRQLWVLILLMLMGGEVFTSMLGLYFNNANANRNENSQRSLPSISLDIEFNSPANNGDHKITECGQSEETMSQNQVQQNKSITYNPCAVLVRIVTGYFVATVISSSVIIIIYFWIDSDARNVLKSKEINMYTFCIFTAVSSFANCGFTPLNSNMQPFRKNWVLLLLVIPQILAGNTLFSPLLRLCVWVLGKVSGKAEYAYILQHPGETGYKHLHVRRNSVYIVLSVTGLILLQVMFICSFEWNSESLEGMNWLQKLVGLLFQSVNTRQAGESILDISTLSPSTLLLFAVVMYLPSDASFLTANADNQPLTDKKTNSISRALWRNFTVNKLSCLAMFTFLACITERKSISSDPLNFNIFSIVFEIISAFGNVGYSLGYSCQKLLKPDATCKDASYGFVGRWTEEGKLIVILVMFLGRLKEFILK</sequence>
<accession>Q7XPF8</accession>
<accession>C7J0U7</accession>
<accession>Q8L542</accession>